<keyword id="KW-0067">ATP-binding</keyword>
<keyword id="KW-0414">Isoprene biosynthesis</keyword>
<keyword id="KW-0418">Kinase</keyword>
<keyword id="KW-0547">Nucleotide-binding</keyword>
<keyword id="KW-1185">Reference proteome</keyword>
<keyword id="KW-0808">Transferase</keyword>
<reference key="1">
    <citation type="journal article" date="2007" name="Science">
        <title>Legumes symbioses: absence of nod genes in photosynthetic bradyrhizobia.</title>
        <authorList>
            <person name="Giraud E."/>
            <person name="Moulin L."/>
            <person name="Vallenet D."/>
            <person name="Barbe V."/>
            <person name="Cytryn E."/>
            <person name="Avarre J.-C."/>
            <person name="Jaubert M."/>
            <person name="Simon D."/>
            <person name="Cartieaux F."/>
            <person name="Prin Y."/>
            <person name="Bena G."/>
            <person name="Hannibal L."/>
            <person name="Fardoux J."/>
            <person name="Kojadinovic M."/>
            <person name="Vuillet L."/>
            <person name="Lajus A."/>
            <person name="Cruveiller S."/>
            <person name="Rouy Z."/>
            <person name="Mangenot S."/>
            <person name="Segurens B."/>
            <person name="Dossat C."/>
            <person name="Franck W.L."/>
            <person name="Chang W.-S."/>
            <person name="Saunders E."/>
            <person name="Bruce D."/>
            <person name="Richardson P."/>
            <person name="Normand P."/>
            <person name="Dreyfus B."/>
            <person name="Pignol D."/>
            <person name="Stacey G."/>
            <person name="Emerich D."/>
            <person name="Vermeglio A."/>
            <person name="Medigue C."/>
            <person name="Sadowsky M."/>
        </authorList>
    </citation>
    <scope>NUCLEOTIDE SEQUENCE [LARGE SCALE GENOMIC DNA]</scope>
    <source>
        <strain>ORS 278</strain>
    </source>
</reference>
<accession>A4YPQ3</accession>
<sequence length="300" mass="30438">MLASTVTGALQEQGRAKVNLTLRVVGRRADGYHDLESVVAFADCADQLTLAPSPELTLTTTGPLADACGDTSDNLVLKAARLLAEAVPGLTLGAFTLEKVLPVAAGIGGGSADAAAALRLLARLNGLSLDDPRLQAVALKTGADVPVCVPSRACTMTGVGENLQPLALPVLPCVMINPRVPVATKDVFQALGLKPGDLLVGVSDVLAAPAWPKAGASIGDWVAALDQVKNDLEPPALKVQPIIGTVLDALRASNGVLLARMSGSGATCFAIYGGDADAKIAGAAIAAAHPEWWVHAGTLS</sequence>
<protein>
    <recommendedName>
        <fullName evidence="1">4-diphosphocytidyl-2-C-methyl-D-erythritol kinase</fullName>
        <shortName evidence="1">CMK</shortName>
        <ecNumber evidence="1">2.7.1.148</ecNumber>
    </recommendedName>
    <alternativeName>
        <fullName evidence="1">4-(cytidine-5'-diphospho)-2-C-methyl-D-erythritol kinase</fullName>
    </alternativeName>
</protein>
<name>ISPE_BRASO</name>
<feature type="chain" id="PRO_1000007816" description="4-diphosphocytidyl-2-C-methyl-D-erythritol kinase">
    <location>
        <begin position="1"/>
        <end position="300"/>
    </location>
</feature>
<feature type="active site" evidence="1">
    <location>
        <position position="17"/>
    </location>
</feature>
<feature type="active site" evidence="1">
    <location>
        <position position="144"/>
    </location>
</feature>
<feature type="binding site" evidence="1">
    <location>
        <begin position="102"/>
        <end position="112"/>
    </location>
    <ligand>
        <name>ATP</name>
        <dbReference type="ChEBI" id="CHEBI:30616"/>
    </ligand>
</feature>
<proteinExistence type="inferred from homology"/>
<evidence type="ECO:0000255" key="1">
    <source>
        <dbReference type="HAMAP-Rule" id="MF_00061"/>
    </source>
</evidence>
<organism>
    <name type="scientific">Bradyrhizobium sp. (strain ORS 278)</name>
    <dbReference type="NCBI Taxonomy" id="114615"/>
    <lineage>
        <taxon>Bacteria</taxon>
        <taxon>Pseudomonadati</taxon>
        <taxon>Pseudomonadota</taxon>
        <taxon>Alphaproteobacteria</taxon>
        <taxon>Hyphomicrobiales</taxon>
        <taxon>Nitrobacteraceae</taxon>
        <taxon>Bradyrhizobium</taxon>
    </lineage>
</organism>
<gene>
    <name evidence="1" type="primary">ispE</name>
    <name type="ordered locus">BRADO2022</name>
</gene>
<dbReference type="EC" id="2.7.1.148" evidence="1"/>
<dbReference type="EMBL" id="CU234118">
    <property type="protein sequence ID" value="CAL75879.1"/>
    <property type="molecule type" value="Genomic_DNA"/>
</dbReference>
<dbReference type="RefSeq" id="WP_011925101.1">
    <property type="nucleotide sequence ID" value="NC_009445.1"/>
</dbReference>
<dbReference type="SMR" id="A4YPQ3"/>
<dbReference type="STRING" id="114615.BRADO2022"/>
<dbReference type="KEGG" id="bra:BRADO2022"/>
<dbReference type="eggNOG" id="COG1947">
    <property type="taxonomic scope" value="Bacteria"/>
</dbReference>
<dbReference type="HOGENOM" id="CLU_053057_1_0_5"/>
<dbReference type="OrthoDB" id="9809438at2"/>
<dbReference type="UniPathway" id="UPA00056">
    <property type="reaction ID" value="UER00094"/>
</dbReference>
<dbReference type="Proteomes" id="UP000001994">
    <property type="component" value="Chromosome"/>
</dbReference>
<dbReference type="GO" id="GO:0050515">
    <property type="term" value="F:4-(cytidine 5'-diphospho)-2-C-methyl-D-erythritol kinase activity"/>
    <property type="evidence" value="ECO:0007669"/>
    <property type="project" value="UniProtKB-UniRule"/>
</dbReference>
<dbReference type="GO" id="GO:0005524">
    <property type="term" value="F:ATP binding"/>
    <property type="evidence" value="ECO:0007669"/>
    <property type="project" value="UniProtKB-UniRule"/>
</dbReference>
<dbReference type="GO" id="GO:0019288">
    <property type="term" value="P:isopentenyl diphosphate biosynthetic process, methylerythritol 4-phosphate pathway"/>
    <property type="evidence" value="ECO:0007669"/>
    <property type="project" value="UniProtKB-UniRule"/>
</dbReference>
<dbReference type="GO" id="GO:0016114">
    <property type="term" value="P:terpenoid biosynthetic process"/>
    <property type="evidence" value="ECO:0007669"/>
    <property type="project" value="InterPro"/>
</dbReference>
<dbReference type="Gene3D" id="3.30.230.10">
    <property type="match status" value="1"/>
</dbReference>
<dbReference type="Gene3D" id="3.30.70.890">
    <property type="entry name" value="GHMP kinase, C-terminal domain"/>
    <property type="match status" value="1"/>
</dbReference>
<dbReference type="HAMAP" id="MF_00061">
    <property type="entry name" value="IspE"/>
    <property type="match status" value="1"/>
</dbReference>
<dbReference type="InterPro" id="IPR013750">
    <property type="entry name" value="GHMP_kinase_C_dom"/>
</dbReference>
<dbReference type="InterPro" id="IPR036554">
    <property type="entry name" value="GHMP_kinase_C_sf"/>
</dbReference>
<dbReference type="InterPro" id="IPR006204">
    <property type="entry name" value="GHMP_kinase_N_dom"/>
</dbReference>
<dbReference type="InterPro" id="IPR004424">
    <property type="entry name" value="IspE"/>
</dbReference>
<dbReference type="InterPro" id="IPR020568">
    <property type="entry name" value="Ribosomal_Su5_D2-typ_SF"/>
</dbReference>
<dbReference type="InterPro" id="IPR014721">
    <property type="entry name" value="Ribsml_uS5_D2-typ_fold_subgr"/>
</dbReference>
<dbReference type="NCBIfam" id="TIGR00154">
    <property type="entry name" value="ispE"/>
    <property type="match status" value="1"/>
</dbReference>
<dbReference type="NCBIfam" id="NF011202">
    <property type="entry name" value="PRK14608.1"/>
    <property type="match status" value="1"/>
</dbReference>
<dbReference type="PANTHER" id="PTHR43527">
    <property type="entry name" value="4-DIPHOSPHOCYTIDYL-2-C-METHYL-D-ERYTHRITOL KINASE, CHLOROPLASTIC"/>
    <property type="match status" value="1"/>
</dbReference>
<dbReference type="PANTHER" id="PTHR43527:SF2">
    <property type="entry name" value="4-DIPHOSPHOCYTIDYL-2-C-METHYL-D-ERYTHRITOL KINASE, CHLOROPLASTIC"/>
    <property type="match status" value="1"/>
</dbReference>
<dbReference type="Pfam" id="PF08544">
    <property type="entry name" value="GHMP_kinases_C"/>
    <property type="match status" value="1"/>
</dbReference>
<dbReference type="Pfam" id="PF00288">
    <property type="entry name" value="GHMP_kinases_N"/>
    <property type="match status" value="1"/>
</dbReference>
<dbReference type="PIRSF" id="PIRSF010376">
    <property type="entry name" value="IspE"/>
    <property type="match status" value="1"/>
</dbReference>
<dbReference type="SUPFAM" id="SSF55060">
    <property type="entry name" value="GHMP Kinase, C-terminal domain"/>
    <property type="match status" value="1"/>
</dbReference>
<dbReference type="SUPFAM" id="SSF54211">
    <property type="entry name" value="Ribosomal protein S5 domain 2-like"/>
    <property type="match status" value="1"/>
</dbReference>
<comment type="function">
    <text evidence="1">Catalyzes the phosphorylation of the position 2 hydroxy group of 4-diphosphocytidyl-2C-methyl-D-erythritol.</text>
</comment>
<comment type="catalytic activity">
    <reaction evidence="1">
        <text>4-CDP-2-C-methyl-D-erythritol + ATP = 4-CDP-2-C-methyl-D-erythritol 2-phosphate + ADP + H(+)</text>
        <dbReference type="Rhea" id="RHEA:18437"/>
        <dbReference type="ChEBI" id="CHEBI:15378"/>
        <dbReference type="ChEBI" id="CHEBI:30616"/>
        <dbReference type="ChEBI" id="CHEBI:57823"/>
        <dbReference type="ChEBI" id="CHEBI:57919"/>
        <dbReference type="ChEBI" id="CHEBI:456216"/>
        <dbReference type="EC" id="2.7.1.148"/>
    </reaction>
</comment>
<comment type="pathway">
    <text evidence="1">Isoprenoid biosynthesis; isopentenyl diphosphate biosynthesis via DXP pathway; isopentenyl diphosphate from 1-deoxy-D-xylulose 5-phosphate: step 3/6.</text>
</comment>
<comment type="similarity">
    <text evidence="1">Belongs to the GHMP kinase family. IspE subfamily.</text>
</comment>